<protein>
    <recommendedName>
        <fullName evidence="1">Hemagglutinin</fullName>
    </recommendedName>
    <component>
        <recommendedName>
            <fullName evidence="1">Hemagglutinin HA1 chain</fullName>
        </recommendedName>
    </component>
    <component>
        <recommendedName>
            <fullName evidence="1">Hemagglutinin HA2 chain</fullName>
        </recommendedName>
    </component>
</protein>
<accession>P11135</accession>
<accession>Q0A2G5</accession>
<name>HEMA_I83A4</name>
<proteinExistence type="inferred from homology"/>
<gene>
    <name evidence="1" type="primary">HA</name>
</gene>
<organism>
    <name type="scientific">Influenza A virus (strain A/Turkey/Ireland/1378/1983 H5N8)</name>
    <dbReference type="NCBI Taxonomy" id="380285"/>
    <lineage>
        <taxon>Viruses</taxon>
        <taxon>Riboviria</taxon>
        <taxon>Orthornavirae</taxon>
        <taxon>Negarnaviricota</taxon>
        <taxon>Polyploviricotina</taxon>
        <taxon>Insthoviricetes</taxon>
        <taxon>Articulavirales</taxon>
        <taxon>Orthomyxoviridae</taxon>
        <taxon>Alphainfluenzavirus</taxon>
        <taxon>Alphainfluenzavirus influenzae</taxon>
        <taxon>Influenza A virus</taxon>
    </lineage>
</organism>
<dbReference type="EMBL" id="M18451">
    <property type="protein sequence ID" value="AAA43083.1"/>
    <property type="molecule type" value="Genomic_RNA"/>
</dbReference>
<dbReference type="EMBL" id="CY015089">
    <property type="protein sequence ID" value="ABI85117.1"/>
    <property type="molecule type" value="Genomic_RNA"/>
</dbReference>
<dbReference type="SMR" id="P11135"/>
<dbReference type="MINT" id="P11135"/>
<dbReference type="GlyCosmos" id="P11135">
    <property type="glycosylation" value="5 sites, No reported glycans"/>
</dbReference>
<dbReference type="Proteomes" id="UP000008583">
    <property type="component" value="Genome"/>
</dbReference>
<dbReference type="GO" id="GO:0020002">
    <property type="term" value="C:host cell plasma membrane"/>
    <property type="evidence" value="ECO:0007669"/>
    <property type="project" value="UniProtKB-SubCell"/>
</dbReference>
<dbReference type="GO" id="GO:0016020">
    <property type="term" value="C:membrane"/>
    <property type="evidence" value="ECO:0007669"/>
    <property type="project" value="UniProtKB-UniRule"/>
</dbReference>
<dbReference type="GO" id="GO:0019031">
    <property type="term" value="C:viral envelope"/>
    <property type="evidence" value="ECO:0007669"/>
    <property type="project" value="UniProtKB-UniRule"/>
</dbReference>
<dbReference type="GO" id="GO:0055036">
    <property type="term" value="C:virion membrane"/>
    <property type="evidence" value="ECO:0007669"/>
    <property type="project" value="UniProtKB-SubCell"/>
</dbReference>
<dbReference type="GO" id="GO:0046789">
    <property type="term" value="F:host cell surface receptor binding"/>
    <property type="evidence" value="ECO:0007669"/>
    <property type="project" value="UniProtKB-UniRule"/>
</dbReference>
<dbReference type="GO" id="GO:0075512">
    <property type="term" value="P:clathrin-dependent endocytosis of virus by host cell"/>
    <property type="evidence" value="ECO:0007669"/>
    <property type="project" value="UniProtKB-UniRule"/>
</dbReference>
<dbReference type="GO" id="GO:0039654">
    <property type="term" value="P:fusion of virus membrane with host endosome membrane"/>
    <property type="evidence" value="ECO:0007669"/>
    <property type="project" value="UniProtKB-UniRule"/>
</dbReference>
<dbReference type="GO" id="GO:0019064">
    <property type="term" value="P:fusion of virus membrane with host plasma membrane"/>
    <property type="evidence" value="ECO:0007669"/>
    <property type="project" value="InterPro"/>
</dbReference>
<dbReference type="GO" id="GO:0046761">
    <property type="term" value="P:viral budding from plasma membrane"/>
    <property type="evidence" value="ECO:0007669"/>
    <property type="project" value="UniProtKB-UniRule"/>
</dbReference>
<dbReference type="GO" id="GO:0019062">
    <property type="term" value="P:virion attachment to host cell"/>
    <property type="evidence" value="ECO:0007669"/>
    <property type="project" value="UniProtKB-KW"/>
</dbReference>
<dbReference type="FunFam" id="3.90.209.20:FF:000001">
    <property type="entry name" value="Hemagglutinin"/>
    <property type="match status" value="1"/>
</dbReference>
<dbReference type="Gene3D" id="3.90.20.10">
    <property type="match status" value="1"/>
</dbReference>
<dbReference type="Gene3D" id="3.90.209.20">
    <property type="match status" value="1"/>
</dbReference>
<dbReference type="HAMAP" id="MF_04072">
    <property type="entry name" value="INFV_HEMA"/>
    <property type="match status" value="1"/>
</dbReference>
<dbReference type="InterPro" id="IPR008980">
    <property type="entry name" value="Capsid_hemagglutn"/>
</dbReference>
<dbReference type="InterPro" id="IPR013828">
    <property type="entry name" value="Hemagglutn_HA1_a/b_dom_sf"/>
</dbReference>
<dbReference type="InterPro" id="IPR000149">
    <property type="entry name" value="Hemagglutn_influenz_A"/>
</dbReference>
<dbReference type="InterPro" id="IPR001364">
    <property type="entry name" value="Hemagglutn_influenz_A/B"/>
</dbReference>
<dbReference type="Pfam" id="PF00509">
    <property type="entry name" value="Hemagglutinin"/>
    <property type="match status" value="1"/>
</dbReference>
<dbReference type="PRINTS" id="PR00330">
    <property type="entry name" value="HEMAGGLUTN1"/>
</dbReference>
<dbReference type="PRINTS" id="PR00329">
    <property type="entry name" value="HEMAGGLUTN12"/>
</dbReference>
<dbReference type="SUPFAM" id="SSF58064">
    <property type="entry name" value="Influenza hemagglutinin (stalk)"/>
    <property type="match status" value="1"/>
</dbReference>
<dbReference type="SUPFAM" id="SSF49818">
    <property type="entry name" value="Viral protein domain"/>
    <property type="match status" value="1"/>
</dbReference>
<evidence type="ECO:0000255" key="1">
    <source>
        <dbReference type="HAMAP-Rule" id="MF_04072"/>
    </source>
</evidence>
<evidence type="ECO:0000305" key="2"/>
<feature type="signal peptide" evidence="1">
    <location>
        <begin position="1"/>
        <end position="16"/>
    </location>
</feature>
<feature type="chain" id="PRO_0000440503" description="Hemagglutinin" evidence="1">
    <location>
        <begin position="17"/>
        <end position="566"/>
    </location>
</feature>
<feature type="chain" id="PRO_0000039048" description="Hemagglutinin HA1 chain" evidence="1">
    <location>
        <begin position="17"/>
        <end position="343"/>
    </location>
</feature>
<feature type="chain" id="PRO_0000039049" description="Hemagglutinin HA2 chain" evidence="1">
    <location>
        <begin position="345"/>
        <end position="566"/>
    </location>
</feature>
<feature type="topological domain" description="Extracellular" evidence="1">
    <location>
        <begin position="17"/>
        <end position="529"/>
    </location>
</feature>
<feature type="transmembrane region" description="Helical" evidence="1">
    <location>
        <begin position="530"/>
        <end position="550"/>
    </location>
</feature>
<feature type="topological domain" description="Cytoplasmic" evidence="1">
    <location>
        <begin position="551"/>
        <end position="566"/>
    </location>
</feature>
<feature type="site" description="Cleavage; by host" evidence="1">
    <location>
        <begin position="344"/>
        <end position="345"/>
    </location>
</feature>
<feature type="lipid moiety-binding region" description="S-palmitoyl cysteine; by host" evidence="1">
    <location>
        <position position="555"/>
    </location>
</feature>
<feature type="lipid moiety-binding region" description="S-palmitoyl cysteine; by host" evidence="1">
    <location>
        <position position="562"/>
    </location>
</feature>
<feature type="lipid moiety-binding region" description="S-palmitoyl cysteine; by host" evidence="1">
    <location>
        <position position="565"/>
    </location>
</feature>
<feature type="glycosylation site" description="N-linked (GlcNAc...) asparagine; by host" evidence="1">
    <location>
        <position position="26"/>
    </location>
</feature>
<feature type="glycosylation site" description="N-linked (GlcNAc...) asparagine; by host" evidence="1">
    <location>
        <position position="27"/>
    </location>
</feature>
<feature type="glycosylation site" description="N-linked (GlcNAc...) asparagine; by host" evidence="1">
    <location>
        <position position="39"/>
    </location>
</feature>
<feature type="glycosylation site" description="N-linked (GlcNAc...) asparagine; by host" evidence="1">
    <location>
        <position position="302"/>
    </location>
</feature>
<feature type="glycosylation site" description="N-linked (GlcNAc...) asparagine; by host" evidence="1">
    <location>
        <position position="498"/>
    </location>
</feature>
<feature type="disulfide bond" description="Interchain (between HA1 and HA2 chains)" evidence="1">
    <location>
        <begin position="20"/>
        <end position="481"/>
    </location>
</feature>
<feature type="disulfide bond" evidence="1">
    <location>
        <begin position="58"/>
        <end position="290"/>
    </location>
</feature>
<feature type="disulfide bond" evidence="1">
    <location>
        <begin position="71"/>
        <end position="83"/>
    </location>
</feature>
<feature type="disulfide bond" evidence="1">
    <location>
        <begin position="106"/>
        <end position="151"/>
    </location>
</feature>
<feature type="disulfide bond" evidence="1">
    <location>
        <begin position="294"/>
        <end position="318"/>
    </location>
</feature>
<feature type="disulfide bond" evidence="1">
    <location>
        <begin position="488"/>
        <end position="492"/>
    </location>
</feature>
<feature type="sequence conflict" description="In Ref. 1; AAA43083." evidence="2" ref="1">
    <original>K</original>
    <variation>E</variation>
    <location>
        <position position="3"/>
    </location>
</feature>
<feature type="sequence conflict" description="In Ref. 1; AAA43083." evidence="2" ref="1">
    <original>V</original>
    <variation>A</variation>
    <location>
        <position position="14"/>
    </location>
</feature>
<feature type="sequence conflict" description="In Ref. 1; AAA43083." evidence="2" ref="1">
    <original>E</original>
    <variation>K</variation>
    <location>
        <position position="234"/>
    </location>
</feature>
<feature type="sequence conflict" description="In Ref. 1; AAA43083." evidence="2" ref="1">
    <original>L</original>
    <variation>F</variation>
    <location>
        <position position="307"/>
    </location>
</feature>
<feature type="sequence conflict" description="In Ref. 1; AAA43083." evidence="2" ref="1">
    <original>I</original>
    <variation>M</variation>
    <location>
        <position position="350"/>
    </location>
</feature>
<feature type="sequence conflict" description="In Ref. 1; AAA43083." evidence="2" ref="1">
    <original>R</original>
    <variation>K</variation>
    <location>
        <position position="387"/>
    </location>
</feature>
<feature type="sequence conflict" description="In Ref. 1; AAA43083." evidence="2" ref="1">
    <original>KM</original>
    <variation>IL</variation>
    <location>
        <begin position="427"/>
        <end position="428"/>
    </location>
</feature>
<feature type="sequence conflict" description="In Ref. 1; AAA43083." evidence="2" ref="1">
    <original>V</original>
    <variation>I</variation>
    <location>
        <position position="520"/>
    </location>
</feature>
<keyword id="KW-1167">Clathrin- and caveolin-independent endocytosis of virus by host</keyword>
<keyword id="KW-1165">Clathrin-mediated endocytosis of virus by host</keyword>
<keyword id="KW-1015">Disulfide bond</keyword>
<keyword id="KW-1170">Fusion of virus membrane with host endosomal membrane</keyword>
<keyword id="KW-1168">Fusion of virus membrane with host membrane</keyword>
<keyword id="KW-0325">Glycoprotein</keyword>
<keyword id="KW-0348">Hemagglutinin</keyword>
<keyword id="KW-1032">Host cell membrane</keyword>
<keyword id="KW-1043">Host membrane</keyword>
<keyword id="KW-0945">Host-virus interaction</keyword>
<keyword id="KW-0449">Lipoprotein</keyword>
<keyword id="KW-0472">Membrane</keyword>
<keyword id="KW-0564">Palmitate</keyword>
<keyword id="KW-0732">Signal</keyword>
<keyword id="KW-0812">Transmembrane</keyword>
<keyword id="KW-1133">Transmembrane helix</keyword>
<keyword id="KW-1161">Viral attachment to host cell</keyword>
<keyword id="KW-0261">Viral envelope protein</keyword>
<keyword id="KW-1162">Viral penetration into host cytoplasm</keyword>
<keyword id="KW-0946">Virion</keyword>
<keyword id="KW-1164">Virus endocytosis by host</keyword>
<keyword id="KW-1160">Virus entry into host cell</keyword>
<organismHost>
    <name type="scientific">Aves</name>
    <dbReference type="NCBI Taxonomy" id="8782"/>
</organismHost>
<comment type="function">
    <text>Binds to sialic acid-containing receptors on the cell surface, bringing about the attachment of the virus particle to the cell. This attachment induces virion internalization of about two third of the virus particles through clathrin-dependent endocytosis and about one third through a clathrin- and caveolin-independent pathway. Plays a major role in the determination of host range restriction and virulence. Class I viral fusion protein. Responsible for penetration of the virus into the cell cytoplasm by mediating the fusion of the membrane of the endocytosed virus particle with the endosomal membrane. Low pH in endosomes induces an irreversible conformational change in HA2, releasing the fusion hydrophobic peptide. Several trimers are required to form a competent fusion pore.</text>
</comment>
<comment type="function">
    <text evidence="1">Binds to sialic acid-containing receptors on the cell surface, bringing about the attachment of the virus particle to the cell. This attachment induces virion internalization either through clathrin-dependent endocytosis or through clathrin- and caveolin-independent pathway. Plays a major role in the determination of host range restriction and virulence. Class I viral fusion protein. Responsible for penetration of the virus into the cell cytoplasm by mediating the fusion of the membrane of the endocytosed virus particle with the endosomal membrane. Low pH in endosomes induces an irreversible conformational change in HA2, releasing the fusion hydrophobic peptide. Several trimers are required to form a competent fusion pore.</text>
</comment>
<comment type="subunit">
    <text evidence="1">Homotrimer of disulfide-linked HA1-HA2.</text>
</comment>
<comment type="subcellular location">
    <subcellularLocation>
        <location evidence="1">Virion membrane</location>
        <topology evidence="1">Single-pass type I membrane protein</topology>
    </subcellularLocation>
    <subcellularLocation>
        <location evidence="1">Host apical cell membrane</location>
        <topology evidence="1">Single-pass type I membrane protein</topology>
    </subcellularLocation>
    <text evidence="1">Targeted to the apical plasma membrane in epithelial polarized cells through a signal present in the transmembrane domain. Associated with glycosphingolipid- and cholesterol-enriched detergent-resistant lipid rafts.</text>
</comment>
<comment type="PTM">
    <text evidence="1">Palmitoylated.</text>
</comment>
<comment type="PTM">
    <text evidence="1">In natural infection, inactive HA is matured into HA1 and HA2 outside the cell by one or more trypsin-like, arginine-specific endoprotease secreted by the bronchial epithelial cells. One identified protease that may be involved in this process is secreted in lungs by club cells.</text>
</comment>
<comment type="miscellaneous">
    <text>Major glycoprotein, comprises over 80% of the envelope proteins present in virus particle.</text>
</comment>
<comment type="miscellaneous">
    <text>The extent of infection into host organism is determined by HA. Influenza viruses bud from the apical surface of polarized epithelial cells (e.g. bronchial epithelial cells) into lumen of lungs and are therefore usually pneumotropic. The reason is that HA is cleaved by tryptase clara which is restricted to lungs. However, HAs of H5 and H7 pantropic avian viruses subtypes can be cleaved by furin and subtilisin-type enzymes, allowing the virus to grow in other organs than lungs.</text>
</comment>
<comment type="miscellaneous">
    <text evidence="2">The influenza A genome consist of 8 RNA segments. Genetic variation of hemagglutinin and/or neuraminidase genes results in the emergence of new influenza strains. The mechanism of variation can be the result of point mutations or the result of genetic reassortment between segments of two different strains.</text>
</comment>
<comment type="similarity">
    <text evidence="1">Belongs to the influenza viruses hemagglutinin family.</text>
</comment>
<sequence length="566" mass="64044">MEKIVLLFAIVSLVRSDQICIGYHANNSTKQVDTIMEKNVTVTHAQDILEKTHNGKLCSLNGVKPLILRDCSVAGWLLGNPMCDEFLNVPEWSYIVEKDNPVNGLCYPGDFNDYEELKHLLSCTKHFEKIRIIPRDSWPNHEASLGVSSACPYNGRSSFFRNVVWLIKKNNAYPTIKRSYSNTNKEDLLILWGIHHPNDAAEQTKLYQNPTTYVSVGTSTLNQRSIPKIATRPELNGQSGRMEFFWTILKPSDTINFESNGNFIAPEYAYKIVKKGDSAIMKSGLEYGNCNTKCQTPIGAINSSMPLHNIHPLTIGECPKYVKSDRLVLATGLRNTPQRKRKKRGLFGAIAGFIEGGWQGMVDGWYGYHHSNEQGSGYAADKESTQRAIDGITNKVNSIIDKMNTQFEAVGKEFNNLERRIENLNKKMEDGFLDVWTYNAELLVLMENERTLDFHDANVKSLYDKVRLQLKDNARELGNGCFEFYHKCDNECMESIRNGTYNYPQYSEEARLNREEISGVKLESMGIYQILSIYSTVASSLALAIMIAGLSFWMCSNGSLQCRICI</sequence>
<reference key="1">
    <citation type="journal article" date="1987" name="Virology">
        <title>Molecular analyses of the hemagglutinin genes of H5 influenza viruses: origin of a virulent turkey strain.</title>
        <authorList>
            <person name="Kawaoka Y."/>
            <person name="Nestorowicz A."/>
            <person name="Alexander D.J."/>
            <person name="Webster R.G."/>
        </authorList>
    </citation>
    <scope>NUCLEOTIDE SEQUENCE [GENOMIC RNA]</scope>
</reference>
<reference key="2">
    <citation type="journal article" date="2006" name="Science">
        <title>Large-scale sequence analysis of avian influenza isolates.</title>
        <authorList>
            <person name="Obenauer J.C."/>
            <person name="Denson J."/>
            <person name="Mehta P.K."/>
            <person name="Su X."/>
            <person name="Mukatira S."/>
            <person name="Finkelstein D.B."/>
            <person name="Xu X."/>
            <person name="Wang J."/>
            <person name="Ma J."/>
            <person name="Fan Y."/>
            <person name="Rakestraw K.M."/>
            <person name="Webster R.G."/>
            <person name="Hoffmann E."/>
            <person name="Krauss S."/>
            <person name="Zheng J."/>
            <person name="Zhang Z."/>
            <person name="Naeve C.W."/>
        </authorList>
    </citation>
    <scope>NUCLEOTIDE SEQUENCE [GENOMIC RNA]</scope>
</reference>